<feature type="initiator methionine" description="Removed" evidence="1">
    <location>
        <position position="1"/>
    </location>
</feature>
<feature type="chain" id="PRO_0000188502" description="3-deoxy-manno-octulosonate cytidylyltransferase">
    <location>
        <begin position="2"/>
        <end position="248"/>
    </location>
</feature>
<protein>
    <recommendedName>
        <fullName evidence="2">3-deoxy-manno-octulosonate cytidylyltransferase</fullName>
        <ecNumber evidence="2">2.7.7.38</ecNumber>
    </recommendedName>
    <alternativeName>
        <fullName evidence="2">CMP-2-keto-3-deoxyoctulosonic acid synthase</fullName>
        <shortName evidence="2">CKS</shortName>
        <shortName evidence="2">CMP-KDO synthase</shortName>
    </alternativeName>
</protein>
<comment type="function">
    <text evidence="2">Activates KDO (a required 8-carbon sugar) for incorporation into bacterial lipopolysaccharide in Gram-negative bacteria.</text>
</comment>
<comment type="catalytic activity">
    <reaction evidence="2">
        <text>3-deoxy-alpha-D-manno-oct-2-ulosonate + CTP = CMP-3-deoxy-beta-D-manno-octulosonate + diphosphate</text>
        <dbReference type="Rhea" id="RHEA:23448"/>
        <dbReference type="ChEBI" id="CHEBI:33019"/>
        <dbReference type="ChEBI" id="CHEBI:37563"/>
        <dbReference type="ChEBI" id="CHEBI:85986"/>
        <dbReference type="ChEBI" id="CHEBI:85987"/>
        <dbReference type="EC" id="2.7.7.38"/>
    </reaction>
</comment>
<comment type="pathway">
    <text evidence="2">Nucleotide-sugar biosynthesis; CMP-3-deoxy-D-manno-octulosonate biosynthesis; CMP-3-deoxy-D-manno-octulosonate from 3-deoxy-D-manno-octulosonate and CTP: step 1/1.</text>
</comment>
<comment type="pathway">
    <text evidence="2">Bacterial outer membrane biogenesis; lipopolysaccharide biosynthesis.</text>
</comment>
<comment type="subcellular location">
    <subcellularLocation>
        <location evidence="2">Cytoplasm</location>
    </subcellularLocation>
</comment>
<comment type="similarity">
    <text evidence="2">Belongs to the KdsB family.</text>
</comment>
<proteinExistence type="inferred from homology"/>
<name>KDSB_ECOL6</name>
<dbReference type="EC" id="2.7.7.38" evidence="2"/>
<dbReference type="EMBL" id="AE014075">
    <property type="protein sequence ID" value="AAN79527.1"/>
    <property type="molecule type" value="Genomic_DNA"/>
</dbReference>
<dbReference type="RefSeq" id="WP_000011621.1">
    <property type="nucleotide sequence ID" value="NZ_CP051263.1"/>
</dbReference>
<dbReference type="SMR" id="Q8FJA9"/>
<dbReference type="STRING" id="199310.c1059"/>
<dbReference type="KEGG" id="ecc:c1059"/>
<dbReference type="eggNOG" id="COG1212">
    <property type="taxonomic scope" value="Bacteria"/>
</dbReference>
<dbReference type="HOGENOM" id="CLU_065038_1_0_6"/>
<dbReference type="BioCyc" id="ECOL199310:C1059-MONOMER"/>
<dbReference type="UniPathway" id="UPA00030"/>
<dbReference type="UniPathway" id="UPA00358">
    <property type="reaction ID" value="UER00476"/>
</dbReference>
<dbReference type="Proteomes" id="UP000001410">
    <property type="component" value="Chromosome"/>
</dbReference>
<dbReference type="GO" id="GO:0005829">
    <property type="term" value="C:cytosol"/>
    <property type="evidence" value="ECO:0007669"/>
    <property type="project" value="TreeGrafter"/>
</dbReference>
<dbReference type="GO" id="GO:0008690">
    <property type="term" value="F:3-deoxy-manno-octulosonate cytidylyltransferase activity"/>
    <property type="evidence" value="ECO:0007669"/>
    <property type="project" value="UniProtKB-UniRule"/>
</dbReference>
<dbReference type="GO" id="GO:0033468">
    <property type="term" value="P:CMP-keto-3-deoxy-D-manno-octulosonic acid biosynthetic process"/>
    <property type="evidence" value="ECO:0007669"/>
    <property type="project" value="UniProtKB-UniRule"/>
</dbReference>
<dbReference type="GO" id="GO:0009103">
    <property type="term" value="P:lipopolysaccharide biosynthetic process"/>
    <property type="evidence" value="ECO:0007669"/>
    <property type="project" value="UniProtKB-UniRule"/>
</dbReference>
<dbReference type="CDD" id="cd02517">
    <property type="entry name" value="CMP-KDO-Synthetase"/>
    <property type="match status" value="1"/>
</dbReference>
<dbReference type="FunFam" id="3.90.550.10:FF:000011">
    <property type="entry name" value="3-deoxy-manno-octulosonate cytidylyltransferase"/>
    <property type="match status" value="1"/>
</dbReference>
<dbReference type="Gene3D" id="3.90.550.10">
    <property type="entry name" value="Spore Coat Polysaccharide Biosynthesis Protein SpsA, Chain A"/>
    <property type="match status" value="1"/>
</dbReference>
<dbReference type="HAMAP" id="MF_00057">
    <property type="entry name" value="KdsB"/>
    <property type="match status" value="1"/>
</dbReference>
<dbReference type="InterPro" id="IPR003329">
    <property type="entry name" value="Cytidylyl_trans"/>
</dbReference>
<dbReference type="InterPro" id="IPR004528">
    <property type="entry name" value="KdsB"/>
</dbReference>
<dbReference type="InterPro" id="IPR029044">
    <property type="entry name" value="Nucleotide-diphossugar_trans"/>
</dbReference>
<dbReference type="NCBIfam" id="TIGR00466">
    <property type="entry name" value="kdsB"/>
    <property type="match status" value="1"/>
</dbReference>
<dbReference type="NCBIfam" id="NF003950">
    <property type="entry name" value="PRK05450.1-3"/>
    <property type="match status" value="1"/>
</dbReference>
<dbReference type="NCBIfam" id="NF003952">
    <property type="entry name" value="PRK05450.1-5"/>
    <property type="match status" value="1"/>
</dbReference>
<dbReference type="NCBIfam" id="NF009905">
    <property type="entry name" value="PRK13368.1"/>
    <property type="match status" value="1"/>
</dbReference>
<dbReference type="PANTHER" id="PTHR42866">
    <property type="entry name" value="3-DEOXY-MANNO-OCTULOSONATE CYTIDYLYLTRANSFERASE"/>
    <property type="match status" value="1"/>
</dbReference>
<dbReference type="PANTHER" id="PTHR42866:SF2">
    <property type="entry name" value="3-DEOXY-MANNO-OCTULOSONATE CYTIDYLYLTRANSFERASE, MITOCHONDRIAL"/>
    <property type="match status" value="1"/>
</dbReference>
<dbReference type="Pfam" id="PF02348">
    <property type="entry name" value="CTP_transf_3"/>
    <property type="match status" value="1"/>
</dbReference>
<dbReference type="SUPFAM" id="SSF53448">
    <property type="entry name" value="Nucleotide-diphospho-sugar transferases"/>
    <property type="match status" value="1"/>
</dbReference>
<keyword id="KW-0963">Cytoplasm</keyword>
<keyword id="KW-0448">Lipopolysaccharide biosynthesis</keyword>
<keyword id="KW-0548">Nucleotidyltransferase</keyword>
<keyword id="KW-1185">Reference proteome</keyword>
<keyword id="KW-0808">Transferase</keyword>
<evidence type="ECO:0000250" key="1"/>
<evidence type="ECO:0000255" key="2">
    <source>
        <dbReference type="HAMAP-Rule" id="MF_00057"/>
    </source>
</evidence>
<gene>
    <name evidence="2" type="primary">kdsB</name>
    <name type="ordered locus">c1059</name>
</gene>
<organism>
    <name type="scientific">Escherichia coli O6:H1 (strain CFT073 / ATCC 700928 / UPEC)</name>
    <dbReference type="NCBI Taxonomy" id="199310"/>
    <lineage>
        <taxon>Bacteria</taxon>
        <taxon>Pseudomonadati</taxon>
        <taxon>Pseudomonadota</taxon>
        <taxon>Gammaproteobacteria</taxon>
        <taxon>Enterobacterales</taxon>
        <taxon>Enterobacteriaceae</taxon>
        <taxon>Escherichia</taxon>
    </lineage>
</organism>
<reference key="1">
    <citation type="journal article" date="2002" name="Proc. Natl. Acad. Sci. U.S.A.">
        <title>Extensive mosaic structure revealed by the complete genome sequence of uropathogenic Escherichia coli.</title>
        <authorList>
            <person name="Welch R.A."/>
            <person name="Burland V."/>
            <person name="Plunkett G. III"/>
            <person name="Redford P."/>
            <person name="Roesch P."/>
            <person name="Rasko D."/>
            <person name="Buckles E.L."/>
            <person name="Liou S.-R."/>
            <person name="Boutin A."/>
            <person name="Hackett J."/>
            <person name="Stroud D."/>
            <person name="Mayhew G.F."/>
            <person name="Rose D.J."/>
            <person name="Zhou S."/>
            <person name="Schwartz D.C."/>
            <person name="Perna N.T."/>
            <person name="Mobley H.L.T."/>
            <person name="Donnenberg M.S."/>
            <person name="Blattner F.R."/>
        </authorList>
    </citation>
    <scope>NUCLEOTIDE SEQUENCE [LARGE SCALE GENOMIC DNA]</scope>
    <source>
        <strain>CFT073 / ATCC 700928 / UPEC</strain>
    </source>
</reference>
<accession>Q8FJA9</accession>
<sequence length="248" mass="27686">MSFVVIIPARYASTRLPGKPLVDINGKPMIVHVLERARESGAERIIVATDHEDVARAVEVAGGEVCMTRADHQSGTERLAEVVEKCAFSDDTVIVNVQGDEPMIPATIIRQVADNLAQRQVGMATLAVPIHNAEEAFNPNAVKVVLDAEGYALYFSRATIPWDRDRFAKDLETVGDNFLRHLGIYGYRAGFIRRYVTWQPSPLEHIEMLEQLRVLWYGEKIHVAVAQEVPGTGVDTPEDLKRVRAEMR</sequence>